<feature type="chain" id="PRO_0000437201" description="Kinesin-like protein KIN-13B">
    <location>
        <begin position="1"/>
        <end position="707"/>
    </location>
</feature>
<feature type="domain" description="Kinesin motor" evidence="2">
    <location>
        <begin position="152"/>
        <end position="477"/>
    </location>
</feature>
<feature type="coiled-coil region" evidence="1">
    <location>
        <begin position="619"/>
        <end position="656"/>
    </location>
</feature>
<feature type="binding site" evidence="2">
    <location>
        <begin position="243"/>
        <end position="250"/>
    </location>
    <ligand>
        <name>ATP</name>
        <dbReference type="ChEBI" id="CHEBI:30616"/>
    </ligand>
</feature>
<feature type="sequence conflict" description="In Ref. 3; EEE55015." evidence="4" ref="3">
    <original>QQLS</original>
    <variation>HHLT</variation>
    <location>
        <begin position="72"/>
        <end position="75"/>
    </location>
</feature>
<feature type="sequence conflict" description="In Ref. 3; EEE55015." evidence="4" ref="3">
    <original>H</original>
    <variation>Q</variation>
    <location>
        <position position="82"/>
    </location>
</feature>
<organism>
    <name type="scientific">Oryza sativa subsp. japonica</name>
    <name type="common">Rice</name>
    <dbReference type="NCBI Taxonomy" id="39947"/>
    <lineage>
        <taxon>Eukaryota</taxon>
        <taxon>Viridiplantae</taxon>
        <taxon>Streptophyta</taxon>
        <taxon>Embryophyta</taxon>
        <taxon>Tracheophyta</taxon>
        <taxon>Spermatophyta</taxon>
        <taxon>Magnoliopsida</taxon>
        <taxon>Liliopsida</taxon>
        <taxon>Poales</taxon>
        <taxon>Poaceae</taxon>
        <taxon>BOP clade</taxon>
        <taxon>Oryzoideae</taxon>
        <taxon>Oryzeae</taxon>
        <taxon>Oryzinae</taxon>
        <taxon>Oryza</taxon>
        <taxon>Oryza sativa</taxon>
    </lineage>
</organism>
<gene>
    <name evidence="4" type="primary">KIN13B</name>
    <name evidence="5" type="ordered locus">Os01g0625200</name>
    <name evidence="4" type="ordered locus">LOC_Os01g43580</name>
    <name evidence="6" type="ORF">OsJ_02667</name>
</gene>
<sequence>MNGGGRRRYSSEQLMFDVPANAGGGAGKWGQRGGVRRGDGEIFVSVEPTTPARLRGGEAAAAAAGESPGQRQQLSPGLLDLHAFDTELISDFQVPGIGMYDGAQKFGYGNGGFDDSDPTFAPNKQMSKSTVFAESNFLKAFPEKEKAAPVAKIKVVVRKRPLNKKEISKKEEDIIDIEQQSNSLTVHETKLKVDLTEYVEKHEFVFDAVLDEDVSNDEVYRETVEPVVPAIFNRTKATCFAYGQTGSGKTYTMRPLPLKASQDILRLMHHTYRNQGYQLFVSFFEIYGGKLFDLLNERSKLCMREDGKQKVCIVGLQEYRVSDVETIKELIEKGNATRSTGTTGANEESSRSHAILQLAIKKRVDGNDSKPPRLAGKLSFIDLAGSERGADTTDNDKQTRIEGAEINKSLLALKECIRALDNDQTHIPFRGSKLTEVLRDSFIGDSRTVMISCISPSSGSCEHTLNTLRYADRVKSLSKGSNTKKDLSLAAAPLRESSPSLLASAVPSFSSAEVMNDITERSNFGWTKQQYVKEHQAPTFVDRMQKVKEDTEFSLSNGGYFKEQRTKGSVPVGIAEVPDTVYQQGRQPTRKARDLTSDNNMRNSIAYPIIRRVVPDEDEHLNELLQEEEDLVSAHRKQVEETLDMIKEEMNLLVEADQPGNQLDDYITRLSGILSQKAAGIVDLQARLAQFQRRLNENNVLLYAQCP</sequence>
<dbReference type="EMBL" id="AP014957">
    <property type="protein sequence ID" value="BAS73247.1"/>
    <property type="status" value="ALT_SEQ"/>
    <property type="molecule type" value="Genomic_DNA"/>
</dbReference>
<dbReference type="EMBL" id="CM000138">
    <property type="protein sequence ID" value="EEE55015.1"/>
    <property type="molecule type" value="Genomic_DNA"/>
</dbReference>
<dbReference type="EMBL" id="AK071022">
    <property type="status" value="NOT_ANNOTATED_CDS"/>
    <property type="molecule type" value="mRNA"/>
</dbReference>
<dbReference type="RefSeq" id="XP_015620912.1">
    <property type="nucleotide sequence ID" value="XM_015765426.1"/>
</dbReference>
<dbReference type="SMR" id="B9EY52"/>
<dbReference type="FunCoup" id="B9EY52">
    <property type="interactions" value="2108"/>
</dbReference>
<dbReference type="STRING" id="39947.B9EY52"/>
<dbReference type="PaxDb" id="39947-B9EY52"/>
<dbReference type="eggNOG" id="KOG0246">
    <property type="taxonomic scope" value="Eukaryota"/>
</dbReference>
<dbReference type="HOGENOM" id="CLU_001485_19_2_1"/>
<dbReference type="InParanoid" id="B9EY52"/>
<dbReference type="OrthoDB" id="3176171at2759"/>
<dbReference type="Proteomes" id="UP000007752">
    <property type="component" value="Chromosome 1"/>
</dbReference>
<dbReference type="Proteomes" id="UP000059680">
    <property type="component" value="Chromosome 1"/>
</dbReference>
<dbReference type="GO" id="GO:0005874">
    <property type="term" value="C:microtubule"/>
    <property type="evidence" value="ECO:0000318"/>
    <property type="project" value="GO_Central"/>
</dbReference>
<dbReference type="GO" id="GO:0005524">
    <property type="term" value="F:ATP binding"/>
    <property type="evidence" value="ECO:0007669"/>
    <property type="project" value="UniProtKB-KW"/>
</dbReference>
<dbReference type="GO" id="GO:0008017">
    <property type="term" value="F:microtubule binding"/>
    <property type="evidence" value="ECO:0007669"/>
    <property type="project" value="InterPro"/>
</dbReference>
<dbReference type="GO" id="GO:0003777">
    <property type="term" value="F:microtubule motor activity"/>
    <property type="evidence" value="ECO:0000318"/>
    <property type="project" value="GO_Central"/>
</dbReference>
<dbReference type="GO" id="GO:0007019">
    <property type="term" value="P:microtubule depolymerization"/>
    <property type="evidence" value="ECO:0000318"/>
    <property type="project" value="GO_Central"/>
</dbReference>
<dbReference type="GO" id="GO:0007018">
    <property type="term" value="P:microtubule-based movement"/>
    <property type="evidence" value="ECO:0007669"/>
    <property type="project" value="InterPro"/>
</dbReference>
<dbReference type="CDD" id="cd01367">
    <property type="entry name" value="KISc_KIF2_like"/>
    <property type="match status" value="1"/>
</dbReference>
<dbReference type="FunFam" id="3.40.850.10:FF:000012">
    <property type="entry name" value="Kinesin-like protein"/>
    <property type="match status" value="1"/>
</dbReference>
<dbReference type="Gene3D" id="3.40.850.10">
    <property type="entry name" value="Kinesin motor domain"/>
    <property type="match status" value="1"/>
</dbReference>
<dbReference type="InterPro" id="IPR027640">
    <property type="entry name" value="Kinesin-like_fam"/>
</dbReference>
<dbReference type="InterPro" id="IPR019821">
    <property type="entry name" value="Kinesin_motor_CS"/>
</dbReference>
<dbReference type="InterPro" id="IPR001752">
    <property type="entry name" value="Kinesin_motor_dom"/>
</dbReference>
<dbReference type="InterPro" id="IPR036961">
    <property type="entry name" value="Kinesin_motor_dom_sf"/>
</dbReference>
<dbReference type="InterPro" id="IPR027417">
    <property type="entry name" value="P-loop_NTPase"/>
</dbReference>
<dbReference type="PANTHER" id="PTHR47971:SF15">
    <property type="entry name" value="KINESIN-LIKE PROTEIN KIN-13B"/>
    <property type="match status" value="1"/>
</dbReference>
<dbReference type="PANTHER" id="PTHR47971">
    <property type="entry name" value="KINESIN-RELATED PROTEIN 6"/>
    <property type="match status" value="1"/>
</dbReference>
<dbReference type="Pfam" id="PF00225">
    <property type="entry name" value="Kinesin"/>
    <property type="match status" value="1"/>
</dbReference>
<dbReference type="PRINTS" id="PR00380">
    <property type="entry name" value="KINESINHEAVY"/>
</dbReference>
<dbReference type="SMART" id="SM00129">
    <property type="entry name" value="KISc"/>
    <property type="match status" value="1"/>
</dbReference>
<dbReference type="SUPFAM" id="SSF52540">
    <property type="entry name" value="P-loop containing nucleoside triphosphate hydrolases"/>
    <property type="match status" value="1"/>
</dbReference>
<dbReference type="PROSITE" id="PS00411">
    <property type="entry name" value="KINESIN_MOTOR_1"/>
    <property type="match status" value="1"/>
</dbReference>
<dbReference type="PROSITE" id="PS50067">
    <property type="entry name" value="KINESIN_MOTOR_2"/>
    <property type="match status" value="1"/>
</dbReference>
<accession>B9EY52</accession>
<accession>A0A0P0V5H8</accession>
<comment type="similarity">
    <text evidence="3">Belongs to the TRAFAC class myosin-kinesin ATPase superfamily. Kinesin family. KIN-13 subfamily.</text>
</comment>
<comment type="sequence caution" evidence="4">
    <conflict type="erroneous gene model prediction">
        <sequence resource="EMBL-CDS" id="BAS73247"/>
    </conflict>
</comment>
<reference key="1">
    <citation type="journal article" date="2005" name="Nature">
        <title>The map-based sequence of the rice genome.</title>
        <authorList>
            <consortium name="International rice genome sequencing project (IRGSP)"/>
        </authorList>
    </citation>
    <scope>NUCLEOTIDE SEQUENCE [LARGE SCALE GENOMIC DNA]</scope>
    <source>
        <strain>cv. Nipponbare</strain>
    </source>
</reference>
<reference key="2">
    <citation type="journal article" date="2013" name="Rice">
        <title>Improvement of the Oryza sativa Nipponbare reference genome using next generation sequence and optical map data.</title>
        <authorList>
            <person name="Kawahara Y."/>
            <person name="de la Bastide M."/>
            <person name="Hamilton J.P."/>
            <person name="Kanamori H."/>
            <person name="McCombie W.R."/>
            <person name="Ouyang S."/>
            <person name="Schwartz D.C."/>
            <person name="Tanaka T."/>
            <person name="Wu J."/>
            <person name="Zhou S."/>
            <person name="Childs K.L."/>
            <person name="Davidson R.M."/>
            <person name="Lin H."/>
            <person name="Quesada-Ocampo L."/>
            <person name="Vaillancourt B."/>
            <person name="Sakai H."/>
            <person name="Lee S.S."/>
            <person name="Kim J."/>
            <person name="Numa H."/>
            <person name="Itoh T."/>
            <person name="Buell C.R."/>
            <person name="Matsumoto T."/>
        </authorList>
    </citation>
    <scope>GENOME REANNOTATION</scope>
    <source>
        <strain>cv. Nipponbare</strain>
    </source>
</reference>
<reference key="3">
    <citation type="journal article" date="2005" name="PLoS Biol.">
        <title>The genomes of Oryza sativa: a history of duplications.</title>
        <authorList>
            <person name="Yu J."/>
            <person name="Wang J."/>
            <person name="Lin W."/>
            <person name="Li S."/>
            <person name="Li H."/>
            <person name="Zhou J."/>
            <person name="Ni P."/>
            <person name="Dong W."/>
            <person name="Hu S."/>
            <person name="Zeng C."/>
            <person name="Zhang J."/>
            <person name="Zhang Y."/>
            <person name="Li R."/>
            <person name="Xu Z."/>
            <person name="Li S."/>
            <person name="Li X."/>
            <person name="Zheng H."/>
            <person name="Cong L."/>
            <person name="Lin L."/>
            <person name="Yin J."/>
            <person name="Geng J."/>
            <person name="Li G."/>
            <person name="Shi J."/>
            <person name="Liu J."/>
            <person name="Lv H."/>
            <person name="Li J."/>
            <person name="Wang J."/>
            <person name="Deng Y."/>
            <person name="Ran L."/>
            <person name="Shi X."/>
            <person name="Wang X."/>
            <person name="Wu Q."/>
            <person name="Li C."/>
            <person name="Ren X."/>
            <person name="Wang J."/>
            <person name="Wang X."/>
            <person name="Li D."/>
            <person name="Liu D."/>
            <person name="Zhang X."/>
            <person name="Ji Z."/>
            <person name="Zhao W."/>
            <person name="Sun Y."/>
            <person name="Zhang Z."/>
            <person name="Bao J."/>
            <person name="Han Y."/>
            <person name="Dong L."/>
            <person name="Ji J."/>
            <person name="Chen P."/>
            <person name="Wu S."/>
            <person name="Liu J."/>
            <person name="Xiao Y."/>
            <person name="Bu D."/>
            <person name="Tan J."/>
            <person name="Yang L."/>
            <person name="Ye C."/>
            <person name="Zhang J."/>
            <person name="Xu J."/>
            <person name="Zhou Y."/>
            <person name="Yu Y."/>
            <person name="Zhang B."/>
            <person name="Zhuang S."/>
            <person name="Wei H."/>
            <person name="Liu B."/>
            <person name="Lei M."/>
            <person name="Yu H."/>
            <person name="Li Y."/>
            <person name="Xu H."/>
            <person name="Wei S."/>
            <person name="He X."/>
            <person name="Fang L."/>
            <person name="Zhang Z."/>
            <person name="Zhang Y."/>
            <person name="Huang X."/>
            <person name="Su Z."/>
            <person name="Tong W."/>
            <person name="Li J."/>
            <person name="Tong Z."/>
            <person name="Li S."/>
            <person name="Ye J."/>
            <person name="Wang L."/>
            <person name="Fang L."/>
            <person name="Lei T."/>
            <person name="Chen C.-S."/>
            <person name="Chen H.-C."/>
            <person name="Xu Z."/>
            <person name="Li H."/>
            <person name="Huang H."/>
            <person name="Zhang F."/>
            <person name="Xu H."/>
            <person name="Li N."/>
            <person name="Zhao C."/>
            <person name="Li S."/>
            <person name="Dong L."/>
            <person name="Huang Y."/>
            <person name="Li L."/>
            <person name="Xi Y."/>
            <person name="Qi Q."/>
            <person name="Li W."/>
            <person name="Zhang B."/>
            <person name="Hu W."/>
            <person name="Zhang Y."/>
            <person name="Tian X."/>
            <person name="Jiao Y."/>
            <person name="Liang X."/>
            <person name="Jin J."/>
            <person name="Gao L."/>
            <person name="Zheng W."/>
            <person name="Hao B."/>
            <person name="Liu S.-M."/>
            <person name="Wang W."/>
            <person name="Yuan L."/>
            <person name="Cao M."/>
            <person name="McDermott J."/>
            <person name="Samudrala R."/>
            <person name="Wang J."/>
            <person name="Wong G.K.-S."/>
            <person name="Yang H."/>
        </authorList>
    </citation>
    <scope>NUCLEOTIDE SEQUENCE [LARGE SCALE GENOMIC DNA]</scope>
    <source>
        <strain>cv. Nipponbare</strain>
    </source>
</reference>
<reference key="4">
    <citation type="journal article" date="2003" name="Science">
        <title>Collection, mapping, and annotation of over 28,000 cDNA clones from japonica rice.</title>
        <authorList>
            <consortium name="The rice full-length cDNA consortium"/>
        </authorList>
    </citation>
    <scope>NUCLEOTIDE SEQUENCE [LARGE SCALE MRNA] OF 505-707</scope>
    <source>
        <strain>cv. Nipponbare</strain>
    </source>
</reference>
<reference key="5">
    <citation type="journal article" date="2009" name="Ann. Bot.">
        <title>Evaluating the microtubule cytoskeleton and its interacting proteins in monocots by mining the rice genome.</title>
        <authorList>
            <person name="Guo L."/>
            <person name="Ho C.M."/>
            <person name="Kong Z."/>
            <person name="Lee Y.R."/>
            <person name="Qian Q."/>
            <person name="Liu B."/>
        </authorList>
    </citation>
    <scope>GENE FAMILY</scope>
    <scope>NOMENCLATURE</scope>
</reference>
<proteinExistence type="evidence at transcript level"/>
<keyword id="KW-0067">ATP-binding</keyword>
<keyword id="KW-0175">Coiled coil</keyword>
<keyword id="KW-0493">Microtubule</keyword>
<keyword id="KW-0505">Motor protein</keyword>
<keyword id="KW-0547">Nucleotide-binding</keyword>
<keyword id="KW-1185">Reference proteome</keyword>
<protein>
    <recommendedName>
        <fullName evidence="4">Kinesin-like protein KIN-13B</fullName>
    </recommendedName>
</protein>
<name>KN13B_ORYSJ</name>
<evidence type="ECO:0000255" key="1"/>
<evidence type="ECO:0000255" key="2">
    <source>
        <dbReference type="PROSITE-ProRule" id="PRU00283"/>
    </source>
</evidence>
<evidence type="ECO:0000303" key="3">
    <source>
    </source>
</evidence>
<evidence type="ECO:0000305" key="4"/>
<evidence type="ECO:0000312" key="5">
    <source>
        <dbReference type="EMBL" id="BAS73247.1"/>
    </source>
</evidence>
<evidence type="ECO:0000312" key="6">
    <source>
        <dbReference type="EMBL" id="EEE55015.1"/>
    </source>
</evidence>